<accession>Q9P7L1</accession>
<reference key="1">
    <citation type="journal article" date="2002" name="Nature">
        <title>The genome sequence of Schizosaccharomyces pombe.</title>
        <authorList>
            <person name="Wood V."/>
            <person name="Gwilliam R."/>
            <person name="Rajandream M.A."/>
            <person name="Lyne M.H."/>
            <person name="Lyne R."/>
            <person name="Stewart A."/>
            <person name="Sgouros J.G."/>
            <person name="Peat N."/>
            <person name="Hayles J."/>
            <person name="Baker S.G."/>
            <person name="Basham D."/>
            <person name="Bowman S."/>
            <person name="Brooks K."/>
            <person name="Brown D."/>
            <person name="Brown S."/>
            <person name="Chillingworth T."/>
            <person name="Churcher C.M."/>
            <person name="Collins M."/>
            <person name="Connor R."/>
            <person name="Cronin A."/>
            <person name="Davis P."/>
            <person name="Feltwell T."/>
            <person name="Fraser A."/>
            <person name="Gentles S."/>
            <person name="Goble A."/>
            <person name="Hamlin N."/>
            <person name="Harris D.E."/>
            <person name="Hidalgo J."/>
            <person name="Hodgson G."/>
            <person name="Holroyd S."/>
            <person name="Hornsby T."/>
            <person name="Howarth S."/>
            <person name="Huckle E.J."/>
            <person name="Hunt S."/>
            <person name="Jagels K."/>
            <person name="James K.D."/>
            <person name="Jones L."/>
            <person name="Jones M."/>
            <person name="Leather S."/>
            <person name="McDonald S."/>
            <person name="McLean J."/>
            <person name="Mooney P."/>
            <person name="Moule S."/>
            <person name="Mungall K.L."/>
            <person name="Murphy L.D."/>
            <person name="Niblett D."/>
            <person name="Odell C."/>
            <person name="Oliver K."/>
            <person name="O'Neil S."/>
            <person name="Pearson D."/>
            <person name="Quail M.A."/>
            <person name="Rabbinowitsch E."/>
            <person name="Rutherford K.M."/>
            <person name="Rutter S."/>
            <person name="Saunders D."/>
            <person name="Seeger K."/>
            <person name="Sharp S."/>
            <person name="Skelton J."/>
            <person name="Simmonds M.N."/>
            <person name="Squares R."/>
            <person name="Squares S."/>
            <person name="Stevens K."/>
            <person name="Taylor K."/>
            <person name="Taylor R.G."/>
            <person name="Tivey A."/>
            <person name="Walsh S.V."/>
            <person name="Warren T."/>
            <person name="Whitehead S."/>
            <person name="Woodward J.R."/>
            <person name="Volckaert G."/>
            <person name="Aert R."/>
            <person name="Robben J."/>
            <person name="Grymonprez B."/>
            <person name="Weltjens I."/>
            <person name="Vanstreels E."/>
            <person name="Rieger M."/>
            <person name="Schaefer M."/>
            <person name="Mueller-Auer S."/>
            <person name="Gabel C."/>
            <person name="Fuchs M."/>
            <person name="Duesterhoeft A."/>
            <person name="Fritzc C."/>
            <person name="Holzer E."/>
            <person name="Moestl D."/>
            <person name="Hilbert H."/>
            <person name="Borzym K."/>
            <person name="Langer I."/>
            <person name="Beck A."/>
            <person name="Lehrach H."/>
            <person name="Reinhardt R."/>
            <person name="Pohl T.M."/>
            <person name="Eger P."/>
            <person name="Zimmermann W."/>
            <person name="Wedler H."/>
            <person name="Wambutt R."/>
            <person name="Purnelle B."/>
            <person name="Goffeau A."/>
            <person name="Cadieu E."/>
            <person name="Dreano S."/>
            <person name="Gloux S."/>
            <person name="Lelaure V."/>
            <person name="Mottier S."/>
            <person name="Galibert F."/>
            <person name="Aves S.J."/>
            <person name="Xiang Z."/>
            <person name="Hunt C."/>
            <person name="Moore K."/>
            <person name="Hurst S.M."/>
            <person name="Lucas M."/>
            <person name="Rochet M."/>
            <person name="Gaillardin C."/>
            <person name="Tallada V.A."/>
            <person name="Garzon A."/>
            <person name="Thode G."/>
            <person name="Daga R.R."/>
            <person name="Cruzado L."/>
            <person name="Jimenez J."/>
            <person name="Sanchez M."/>
            <person name="del Rey F."/>
            <person name="Benito J."/>
            <person name="Dominguez A."/>
            <person name="Revuelta J.L."/>
            <person name="Moreno S."/>
            <person name="Armstrong J."/>
            <person name="Forsburg S.L."/>
            <person name="Cerutti L."/>
            <person name="Lowe T."/>
            <person name="McCombie W.R."/>
            <person name="Paulsen I."/>
            <person name="Potashkin J."/>
            <person name="Shpakovski G.V."/>
            <person name="Ussery D."/>
            <person name="Barrell B.G."/>
            <person name="Nurse P."/>
        </authorList>
    </citation>
    <scope>NUCLEOTIDE SEQUENCE [LARGE SCALE GENOMIC DNA]</scope>
    <source>
        <strain>972 / ATCC 24843</strain>
    </source>
</reference>
<reference key="2">
    <citation type="journal article" date="2006" name="Nat. Biotechnol.">
        <title>ORFeome cloning and global analysis of protein localization in the fission yeast Schizosaccharomyces pombe.</title>
        <authorList>
            <person name="Matsuyama A."/>
            <person name="Arai R."/>
            <person name="Yashiroda Y."/>
            <person name="Shirai A."/>
            <person name="Kamata A."/>
            <person name="Sekido S."/>
            <person name="Kobayashi Y."/>
            <person name="Hashimoto A."/>
            <person name="Hamamoto M."/>
            <person name="Hiraoka Y."/>
            <person name="Horinouchi S."/>
            <person name="Yoshida M."/>
        </authorList>
    </citation>
    <scope>SUBCELLULAR LOCATION [LARGE SCALE ANALYSIS]</scope>
</reference>
<dbReference type="EMBL" id="CU329671">
    <property type="protein sequence ID" value="CAB76048.1"/>
    <property type="molecule type" value="Genomic_DNA"/>
</dbReference>
<dbReference type="PIR" id="T50356">
    <property type="entry name" value="T50356"/>
</dbReference>
<dbReference type="RefSeq" id="NP_596592.1">
    <property type="nucleotide sequence ID" value="NM_001022512.2"/>
</dbReference>
<dbReference type="SMR" id="Q9P7L1"/>
<dbReference type="FunCoup" id="Q9P7L1">
    <property type="interactions" value="421"/>
</dbReference>
<dbReference type="STRING" id="284812.Q9P7L1"/>
<dbReference type="iPTMnet" id="Q9P7L1"/>
<dbReference type="PaxDb" id="4896-SPBC21C3.12c.1"/>
<dbReference type="EnsemblFungi" id="SPBC21C3.12c.1">
    <property type="protein sequence ID" value="SPBC21C3.12c.1:pep"/>
    <property type="gene ID" value="SPBC21C3.12c"/>
</dbReference>
<dbReference type="KEGG" id="spo:2540715"/>
<dbReference type="PomBase" id="SPBC21C3.12c"/>
<dbReference type="VEuPathDB" id="FungiDB:SPBC21C3.12c"/>
<dbReference type="eggNOG" id="KOG3425">
    <property type="taxonomic scope" value="Eukaryota"/>
</dbReference>
<dbReference type="HOGENOM" id="CLU_120161_2_0_1"/>
<dbReference type="InParanoid" id="Q9P7L1"/>
<dbReference type="OMA" id="DYDCLDA"/>
<dbReference type="PhylomeDB" id="Q9P7L1"/>
<dbReference type="PRO" id="PR:Q9P7L1"/>
<dbReference type="Proteomes" id="UP000002485">
    <property type="component" value="Chromosome II"/>
</dbReference>
<dbReference type="GO" id="GO:0005829">
    <property type="term" value="C:cytosol"/>
    <property type="evidence" value="ECO:0007005"/>
    <property type="project" value="PomBase"/>
</dbReference>
<dbReference type="GO" id="GO:0005634">
    <property type="term" value="C:nucleus"/>
    <property type="evidence" value="ECO:0007005"/>
    <property type="project" value="PomBase"/>
</dbReference>
<dbReference type="GO" id="GO:0004601">
    <property type="term" value="F:peroxidase activity"/>
    <property type="evidence" value="ECO:0000250"/>
    <property type="project" value="PomBase"/>
</dbReference>
<dbReference type="GO" id="GO:0047134">
    <property type="term" value="F:protein-disulfide reductase [NAD(P)H] activity"/>
    <property type="evidence" value="ECO:0000318"/>
    <property type="project" value="GO_Central"/>
</dbReference>
<dbReference type="GO" id="GO:0098869">
    <property type="term" value="P:cellular oxidant detoxification"/>
    <property type="evidence" value="ECO:0000305"/>
    <property type="project" value="PomBase"/>
</dbReference>
<dbReference type="FunFam" id="3.40.30.10:FF:000304">
    <property type="entry name" value="Unplaced genomic scaffold supercont1.12, whole genome shotgun sequence"/>
    <property type="match status" value="1"/>
</dbReference>
<dbReference type="Gene3D" id="3.40.30.10">
    <property type="entry name" value="Glutaredoxin"/>
    <property type="match status" value="1"/>
</dbReference>
<dbReference type="InterPro" id="IPR036249">
    <property type="entry name" value="Thioredoxin-like_sf"/>
</dbReference>
<dbReference type="InterPro" id="IPR045108">
    <property type="entry name" value="TXNDC17-like"/>
</dbReference>
<dbReference type="InterPro" id="IPR010357">
    <property type="entry name" value="TXNDC17_dom"/>
</dbReference>
<dbReference type="PANTHER" id="PTHR12452">
    <property type="entry name" value="42-9-9 PROTEIN-RELATED"/>
    <property type="match status" value="1"/>
</dbReference>
<dbReference type="PANTHER" id="PTHR12452:SF0">
    <property type="entry name" value="THIOREDOXIN DOMAIN-CONTAINING PROTEIN 17"/>
    <property type="match status" value="1"/>
</dbReference>
<dbReference type="Pfam" id="PF06110">
    <property type="entry name" value="TXD17-like_Trx"/>
    <property type="match status" value="1"/>
</dbReference>
<dbReference type="SUPFAM" id="SSF52833">
    <property type="entry name" value="Thioredoxin-like"/>
    <property type="match status" value="1"/>
</dbReference>
<proteinExistence type="inferred from homology"/>
<evidence type="ECO:0000250" key="1"/>
<evidence type="ECO:0000269" key="2">
    <source>
    </source>
</evidence>
<evidence type="ECO:0000305" key="3"/>
<comment type="subcellular location">
    <subcellularLocation>
        <location evidence="2">Cytoplasm</location>
    </subcellularLocation>
    <subcellularLocation>
        <location evidence="2">Nucleus</location>
    </subcellularLocation>
</comment>
<comment type="similarity">
    <text evidence="3">Belongs to the thioredoxin family.</text>
</comment>
<feature type="chain" id="PRO_0000372630" description="Thioredoxin domain-containing protein C21C3.12c">
    <location>
        <begin position="1"/>
        <end position="124"/>
    </location>
</feature>
<feature type="domain" description="Thioredoxin">
    <location>
        <begin position="37"/>
        <end position="124"/>
    </location>
</feature>
<feature type="active site" description="Nucleophile" evidence="1">
    <location>
        <position position="39"/>
    </location>
</feature>
<name>YOSC_SCHPO</name>
<organism>
    <name type="scientific">Schizosaccharomyces pombe (strain 972 / ATCC 24843)</name>
    <name type="common">Fission yeast</name>
    <dbReference type="NCBI Taxonomy" id="284812"/>
    <lineage>
        <taxon>Eukaryota</taxon>
        <taxon>Fungi</taxon>
        <taxon>Dikarya</taxon>
        <taxon>Ascomycota</taxon>
        <taxon>Taphrinomycotina</taxon>
        <taxon>Schizosaccharomycetes</taxon>
        <taxon>Schizosaccharomycetales</taxon>
        <taxon>Schizosaccharomycetaceae</taxon>
        <taxon>Schizosaccharomyces</taxon>
    </lineage>
</organism>
<sequence>MLLPLKESLESTLANVAKNETLFVAYLASVDPRTKQPWCPTVRAALPLFNNAFNSSKKLNVVHVYVGNMPQWKTPHNEFRVKFGISAVPTLGKYTRDAQGNLKTSLLVDYDCLDANKFSKFIDI</sequence>
<keyword id="KW-0963">Cytoplasm</keyword>
<keyword id="KW-0539">Nucleus</keyword>
<keyword id="KW-1185">Reference proteome</keyword>
<protein>
    <recommendedName>
        <fullName>Thioredoxin domain-containing protein C21C3.12c</fullName>
    </recommendedName>
</protein>
<gene>
    <name type="ORF">SPBC21C3.12c</name>
</gene>